<proteinExistence type="inferred from homology"/>
<reference key="1">
    <citation type="journal article" date="1996" name="Mol. Gen. Genet.">
        <title>The chloroplast chlL gene of the green alga Chlorella vulgaris C-27 contains a self-splicing group I intron.</title>
        <authorList>
            <person name="Kapoor M."/>
            <person name="Wakasugi T."/>
            <person name="Yoshinaga K."/>
            <person name="Sugiura M."/>
        </authorList>
    </citation>
    <scope>NUCLEOTIDE SEQUENCE [GENOMIC DNA]</scope>
    <source>
        <strain>IAM C-27 / Tamiya</strain>
    </source>
</reference>
<reference key="2">
    <citation type="journal article" date="1997" name="Proc. Natl. Acad. Sci. U.S.A.">
        <title>Complete nucleotide sequence of the chloroplast genome from the green alga Chlorella vulgaris: the existence of genes possibly involved in chloroplast division.</title>
        <authorList>
            <person name="Wakasugi T."/>
            <person name="Nagai T."/>
            <person name="Kapoor M."/>
            <person name="Sugita M."/>
            <person name="Ito M."/>
            <person name="Ito S."/>
            <person name="Tsudzuki J."/>
            <person name="Nakashima K."/>
            <person name="Tsudzuki T."/>
            <person name="Suzuki Y."/>
            <person name="Hamada A."/>
            <person name="Ohta T."/>
            <person name="Inamura A."/>
            <person name="Yoshinaga K."/>
            <person name="Sugiura M."/>
        </authorList>
    </citation>
    <scope>NUCLEOTIDE SEQUENCE [LARGE SCALE GENOMIC DNA]</scope>
    <source>
        <strain>IAM C-27 / Tamiya</strain>
    </source>
</reference>
<feature type="chain" id="PRO_0000139555" description="Light-independent protochlorophyllide reductase iron-sulfur ATP-binding protein">
    <location>
        <begin position="1"/>
        <end position="300"/>
    </location>
</feature>
<feature type="binding site" evidence="1">
    <location>
        <begin position="10"/>
        <end position="15"/>
    </location>
    <ligand>
        <name>ATP</name>
        <dbReference type="ChEBI" id="CHEBI:30616"/>
    </ligand>
</feature>
<feature type="binding site" evidence="1">
    <location>
        <position position="14"/>
    </location>
    <ligand>
        <name>Mg(2+)</name>
        <dbReference type="ChEBI" id="CHEBI:18420"/>
    </ligand>
</feature>
<feature type="binding site" evidence="1">
    <location>
        <position position="39"/>
    </location>
    <ligand>
        <name>ATP</name>
        <dbReference type="ChEBI" id="CHEBI:30616"/>
    </ligand>
</feature>
<feature type="binding site" evidence="1">
    <location>
        <position position="95"/>
    </location>
    <ligand>
        <name>[4Fe-4S] cluster</name>
        <dbReference type="ChEBI" id="CHEBI:49883"/>
        <note>ligand shared between dimeric partners</note>
    </ligand>
</feature>
<feature type="binding site" evidence="1">
    <location>
        <position position="129"/>
    </location>
    <ligand>
        <name>[4Fe-4S] cluster</name>
        <dbReference type="ChEBI" id="CHEBI:49883"/>
        <note>ligand shared between dimeric partners</note>
    </ligand>
</feature>
<feature type="binding site" evidence="1">
    <location>
        <begin position="180"/>
        <end position="181"/>
    </location>
    <ligand>
        <name>ATP</name>
        <dbReference type="ChEBI" id="CHEBI:30616"/>
    </ligand>
</feature>
<evidence type="ECO:0000255" key="1">
    <source>
        <dbReference type="HAMAP-Rule" id="MF_00355"/>
    </source>
</evidence>
<gene>
    <name evidence="1" type="primary">chlL</name>
    <name type="synonym">frxC</name>
</gene>
<sequence length="300" mass="32843">MKLAVYGKGGIGKSTTSCNISIALARRGKKVLQIGCDPKHDSTFTLTGFLIPTIIDTLQAKDYHYEDVWPEDVIYQGYGEVDSVEAGGPPAGAGCGGYVVGETVKLLKELNAFYEYDVILFDVLGDVVCGGFAAPLNYADYCLIVTDNGFDALFAANRIVASVREKSKTHPLRLAGLIGNRTSKRDLIDKYVEVCPMPVIEVLPLIEDIRVSRVKGKTVFEMAETDQKLNYICDFYLNIADQLLASPEGVIPLELEDRELFTLLSTFYLTVTPQNQGETQSTISTPLTSNSASELDFILV</sequence>
<dbReference type="EC" id="1.3.7.7" evidence="1"/>
<dbReference type="EMBL" id="AB001684">
    <property type="protein sequence ID" value="BAA57960.1"/>
    <property type="molecule type" value="Genomic_DNA"/>
</dbReference>
<dbReference type="PIR" id="S65554">
    <property type="entry name" value="S65554"/>
</dbReference>
<dbReference type="RefSeq" id="NP_045884.1">
    <property type="nucleotide sequence ID" value="NC_001865.1"/>
</dbReference>
<dbReference type="SMR" id="P56291"/>
<dbReference type="GeneID" id="809127"/>
<dbReference type="UniPathway" id="UPA00670"/>
<dbReference type="GO" id="GO:0009507">
    <property type="term" value="C:chloroplast"/>
    <property type="evidence" value="ECO:0007669"/>
    <property type="project" value="UniProtKB-SubCell"/>
</dbReference>
<dbReference type="GO" id="GO:0051539">
    <property type="term" value="F:4 iron, 4 sulfur cluster binding"/>
    <property type="evidence" value="ECO:0007669"/>
    <property type="project" value="UniProtKB-UniRule"/>
</dbReference>
<dbReference type="GO" id="GO:0005524">
    <property type="term" value="F:ATP binding"/>
    <property type="evidence" value="ECO:0007669"/>
    <property type="project" value="UniProtKB-UniRule"/>
</dbReference>
<dbReference type="GO" id="GO:0046872">
    <property type="term" value="F:metal ion binding"/>
    <property type="evidence" value="ECO:0007669"/>
    <property type="project" value="UniProtKB-KW"/>
</dbReference>
<dbReference type="GO" id="GO:0016730">
    <property type="term" value="F:oxidoreductase activity, acting on iron-sulfur proteins as donors"/>
    <property type="evidence" value="ECO:0007669"/>
    <property type="project" value="InterPro"/>
</dbReference>
<dbReference type="GO" id="GO:0016636">
    <property type="term" value="F:oxidoreductase activity, acting on the CH-CH group of donors, iron-sulfur protein as acceptor"/>
    <property type="evidence" value="ECO:0007669"/>
    <property type="project" value="UniProtKB-UniRule"/>
</dbReference>
<dbReference type="GO" id="GO:0036068">
    <property type="term" value="P:light-independent chlorophyll biosynthetic process"/>
    <property type="evidence" value="ECO:0007669"/>
    <property type="project" value="UniProtKB-UniRule"/>
</dbReference>
<dbReference type="GO" id="GO:0019685">
    <property type="term" value="P:photosynthesis, dark reaction"/>
    <property type="evidence" value="ECO:0007669"/>
    <property type="project" value="InterPro"/>
</dbReference>
<dbReference type="CDD" id="cd02032">
    <property type="entry name" value="Bchl-like"/>
    <property type="match status" value="1"/>
</dbReference>
<dbReference type="Gene3D" id="3.40.50.300">
    <property type="entry name" value="P-loop containing nucleotide triphosphate hydrolases"/>
    <property type="match status" value="1"/>
</dbReference>
<dbReference type="HAMAP" id="MF_00355">
    <property type="entry name" value="ChlL_BchL"/>
    <property type="match status" value="1"/>
</dbReference>
<dbReference type="InterPro" id="IPR030655">
    <property type="entry name" value="NifH/chlL_CS"/>
</dbReference>
<dbReference type="InterPro" id="IPR000392">
    <property type="entry name" value="NifH/frxC"/>
</dbReference>
<dbReference type="InterPro" id="IPR027417">
    <property type="entry name" value="P-loop_NTPase"/>
</dbReference>
<dbReference type="InterPro" id="IPR005971">
    <property type="entry name" value="Protochlorophyllide_ATP-bd"/>
</dbReference>
<dbReference type="NCBIfam" id="TIGR01281">
    <property type="entry name" value="DPOR_bchL"/>
    <property type="match status" value="1"/>
</dbReference>
<dbReference type="PANTHER" id="PTHR42864">
    <property type="entry name" value="LIGHT-INDEPENDENT PROTOCHLOROPHYLLIDE REDUCTASE IRON-SULFUR ATP-BINDING PROTEIN"/>
    <property type="match status" value="1"/>
</dbReference>
<dbReference type="PANTHER" id="PTHR42864:SF2">
    <property type="entry name" value="LIGHT-INDEPENDENT PROTOCHLOROPHYLLIDE REDUCTASE IRON-SULFUR ATP-BINDING PROTEIN"/>
    <property type="match status" value="1"/>
</dbReference>
<dbReference type="Pfam" id="PF00142">
    <property type="entry name" value="Fer4_NifH"/>
    <property type="match status" value="1"/>
</dbReference>
<dbReference type="PIRSF" id="PIRSF000363">
    <property type="entry name" value="Nitrogenase_iron"/>
    <property type="match status" value="1"/>
</dbReference>
<dbReference type="PRINTS" id="PR00091">
    <property type="entry name" value="NITROGNASEII"/>
</dbReference>
<dbReference type="SUPFAM" id="SSF52540">
    <property type="entry name" value="P-loop containing nucleoside triphosphate hydrolases"/>
    <property type="match status" value="1"/>
</dbReference>
<dbReference type="PROSITE" id="PS00746">
    <property type="entry name" value="NIFH_FRXC_1"/>
    <property type="match status" value="1"/>
</dbReference>
<dbReference type="PROSITE" id="PS00692">
    <property type="entry name" value="NIFH_FRXC_2"/>
    <property type="match status" value="1"/>
</dbReference>
<dbReference type="PROSITE" id="PS51026">
    <property type="entry name" value="NIFH_FRXC_3"/>
    <property type="match status" value="1"/>
</dbReference>
<name>CHLL_CHLVU</name>
<geneLocation type="chloroplast"/>
<comment type="function">
    <text evidence="1">Component of the dark-operative protochlorophyllide reductase (DPOR) that uses Mg-ATP and reduced ferredoxin to reduce ring D of protochlorophyllide (Pchlide) to form chlorophyllide a (Chlide). This reaction is light-independent. The L component serves as a unique electron donor to the NB-component of the complex, and binds Mg-ATP.</text>
</comment>
<comment type="catalytic activity">
    <reaction evidence="1">
        <text>chlorophyllide a + oxidized 2[4Fe-4S]-[ferredoxin] + 2 ADP + 2 phosphate = protochlorophyllide a + reduced 2[4Fe-4S]-[ferredoxin] + 2 ATP + 2 H2O</text>
        <dbReference type="Rhea" id="RHEA:28202"/>
        <dbReference type="Rhea" id="RHEA-COMP:10002"/>
        <dbReference type="Rhea" id="RHEA-COMP:10004"/>
        <dbReference type="ChEBI" id="CHEBI:15377"/>
        <dbReference type="ChEBI" id="CHEBI:30616"/>
        <dbReference type="ChEBI" id="CHEBI:33722"/>
        <dbReference type="ChEBI" id="CHEBI:33723"/>
        <dbReference type="ChEBI" id="CHEBI:43474"/>
        <dbReference type="ChEBI" id="CHEBI:83348"/>
        <dbReference type="ChEBI" id="CHEBI:83350"/>
        <dbReference type="ChEBI" id="CHEBI:456216"/>
        <dbReference type="EC" id="1.3.7.7"/>
    </reaction>
</comment>
<comment type="cofactor">
    <cofactor evidence="1">
        <name>[4Fe-4S] cluster</name>
        <dbReference type="ChEBI" id="CHEBI:49883"/>
    </cofactor>
    <text evidence="1">Binds 1 [4Fe-4S] cluster per dimer.</text>
</comment>
<comment type="pathway">
    <text evidence="1">Porphyrin-containing compound metabolism; chlorophyll biosynthesis (light-independent).</text>
</comment>
<comment type="subunit">
    <text evidence="1">Homodimer. Protochlorophyllide reductase is composed of three subunits; ChlL, ChlN and ChlB.</text>
</comment>
<comment type="subcellular location">
    <subcellularLocation>
        <location>Plastid</location>
        <location>Chloroplast</location>
    </subcellularLocation>
</comment>
<comment type="similarity">
    <text evidence="1">Belongs to the NifH/BchL/ChlL family.</text>
</comment>
<accession>P56291</accession>
<protein>
    <recommendedName>
        <fullName evidence="1">Light-independent protochlorophyllide reductase iron-sulfur ATP-binding protein</fullName>
        <shortName evidence="1">DPOR subunit L</shortName>
        <shortName evidence="1">LI-POR subunit L</shortName>
        <ecNumber evidence="1">1.3.7.7</ecNumber>
    </recommendedName>
</protein>
<keyword id="KW-0004">4Fe-4S</keyword>
<keyword id="KW-0067">ATP-binding</keyword>
<keyword id="KW-0149">Chlorophyll biosynthesis</keyword>
<keyword id="KW-0150">Chloroplast</keyword>
<keyword id="KW-0408">Iron</keyword>
<keyword id="KW-0411">Iron-sulfur</keyword>
<keyword id="KW-0460">Magnesium</keyword>
<keyword id="KW-0479">Metal-binding</keyword>
<keyword id="KW-0547">Nucleotide-binding</keyword>
<keyword id="KW-0560">Oxidoreductase</keyword>
<keyword id="KW-0602">Photosynthesis</keyword>
<keyword id="KW-0934">Plastid</keyword>
<organism>
    <name type="scientific">Chlorella vulgaris</name>
    <name type="common">Green alga</name>
    <dbReference type="NCBI Taxonomy" id="3077"/>
    <lineage>
        <taxon>Eukaryota</taxon>
        <taxon>Viridiplantae</taxon>
        <taxon>Chlorophyta</taxon>
        <taxon>core chlorophytes</taxon>
        <taxon>Trebouxiophyceae</taxon>
        <taxon>Chlorellales</taxon>
        <taxon>Chlorellaceae</taxon>
        <taxon>Chlorella clade</taxon>
        <taxon>Chlorella</taxon>
    </lineage>
</organism>